<sequence>MGLLRLLRGNKASAPVARERLQILLAHERGMRGQPDLLGVLREEILAVVSKHVTLDPTKVIVRLERGDEVSTLEVDIEVPNDLERKRVAVA</sequence>
<name>MINE_BRADU</name>
<gene>
    <name evidence="1" type="primary">minE</name>
    <name type="ordered locus">bsr4213</name>
</gene>
<comment type="function">
    <text evidence="1">Prevents the cell division inhibition by proteins MinC and MinD at internal division sites while permitting inhibition at polar sites. This ensures cell division at the proper site by restricting the formation of a division septum at the midpoint of the long axis of the cell.</text>
</comment>
<comment type="similarity">
    <text evidence="1">Belongs to the MinE family.</text>
</comment>
<comment type="sequence caution" evidence="2">
    <conflict type="erroneous initiation">
        <sequence resource="EMBL-CDS" id="BAC49478"/>
    </conflict>
</comment>
<dbReference type="EMBL" id="BA000040">
    <property type="protein sequence ID" value="BAC49478.1"/>
    <property type="status" value="ALT_INIT"/>
    <property type="molecule type" value="Genomic_DNA"/>
</dbReference>
<dbReference type="RefSeq" id="NP_770853.1">
    <property type="nucleotide sequence ID" value="NC_004463.1"/>
</dbReference>
<dbReference type="RefSeq" id="WP_011086986.1">
    <property type="nucleotide sequence ID" value="NZ_CP011360.1"/>
</dbReference>
<dbReference type="SMR" id="Q89MI0"/>
<dbReference type="FunCoup" id="Q89MI0">
    <property type="interactions" value="150"/>
</dbReference>
<dbReference type="STRING" id="224911.AAV28_18115"/>
<dbReference type="EnsemblBacteria" id="BAC49478">
    <property type="protein sequence ID" value="BAC49478"/>
    <property type="gene ID" value="BAC49478"/>
</dbReference>
<dbReference type="GeneID" id="46491214"/>
<dbReference type="KEGG" id="bja:bsr4213"/>
<dbReference type="PATRIC" id="fig|224911.5.peg.4236"/>
<dbReference type="eggNOG" id="COG0851">
    <property type="taxonomic scope" value="Bacteria"/>
</dbReference>
<dbReference type="HOGENOM" id="CLU_137929_2_0_5"/>
<dbReference type="InParanoid" id="Q89MI0"/>
<dbReference type="OrthoDB" id="9802655at2"/>
<dbReference type="Proteomes" id="UP000002526">
    <property type="component" value="Chromosome"/>
</dbReference>
<dbReference type="GO" id="GO:0005886">
    <property type="term" value="C:plasma membrane"/>
    <property type="evidence" value="ECO:0000318"/>
    <property type="project" value="GO_Central"/>
</dbReference>
<dbReference type="GO" id="GO:0000918">
    <property type="term" value="P:division septum site selection"/>
    <property type="evidence" value="ECO:0000318"/>
    <property type="project" value="GO_Central"/>
</dbReference>
<dbReference type="GO" id="GO:0032955">
    <property type="term" value="P:regulation of division septum assembly"/>
    <property type="evidence" value="ECO:0007669"/>
    <property type="project" value="InterPro"/>
</dbReference>
<dbReference type="FunFam" id="3.30.1070.10:FF:000001">
    <property type="entry name" value="Cell division topological specificity factor"/>
    <property type="match status" value="1"/>
</dbReference>
<dbReference type="Gene3D" id="3.30.1070.10">
    <property type="entry name" value="Cell division topological specificity factor MinE"/>
    <property type="match status" value="1"/>
</dbReference>
<dbReference type="HAMAP" id="MF_00262">
    <property type="entry name" value="MinE"/>
    <property type="match status" value="1"/>
</dbReference>
<dbReference type="InterPro" id="IPR005527">
    <property type="entry name" value="MinE"/>
</dbReference>
<dbReference type="InterPro" id="IPR036707">
    <property type="entry name" value="MinE_sf"/>
</dbReference>
<dbReference type="NCBIfam" id="TIGR01215">
    <property type="entry name" value="minE"/>
    <property type="match status" value="1"/>
</dbReference>
<dbReference type="NCBIfam" id="NF001422">
    <property type="entry name" value="PRK00296.1"/>
    <property type="match status" value="1"/>
</dbReference>
<dbReference type="Pfam" id="PF03776">
    <property type="entry name" value="MinE"/>
    <property type="match status" value="1"/>
</dbReference>
<dbReference type="SUPFAM" id="SSF55229">
    <property type="entry name" value="Cell division protein MinE topological specificity domain"/>
    <property type="match status" value="1"/>
</dbReference>
<keyword id="KW-0131">Cell cycle</keyword>
<keyword id="KW-0132">Cell division</keyword>
<keyword id="KW-1185">Reference proteome</keyword>
<feature type="chain" id="PRO_0000298080" description="Cell division topological specificity factor">
    <location>
        <begin position="1"/>
        <end position="91"/>
    </location>
</feature>
<organism>
    <name type="scientific">Bradyrhizobium diazoefficiens (strain JCM 10833 / BCRC 13528 / IAM 13628 / NBRC 14792 / USDA 110)</name>
    <dbReference type="NCBI Taxonomy" id="224911"/>
    <lineage>
        <taxon>Bacteria</taxon>
        <taxon>Pseudomonadati</taxon>
        <taxon>Pseudomonadota</taxon>
        <taxon>Alphaproteobacteria</taxon>
        <taxon>Hyphomicrobiales</taxon>
        <taxon>Nitrobacteraceae</taxon>
        <taxon>Bradyrhizobium</taxon>
    </lineage>
</organism>
<proteinExistence type="inferred from homology"/>
<evidence type="ECO:0000255" key="1">
    <source>
        <dbReference type="HAMAP-Rule" id="MF_00262"/>
    </source>
</evidence>
<evidence type="ECO:0000305" key="2"/>
<protein>
    <recommendedName>
        <fullName evidence="1">Cell division topological specificity factor</fullName>
    </recommendedName>
</protein>
<reference key="1">
    <citation type="journal article" date="2002" name="DNA Res.">
        <title>Complete genomic sequence of nitrogen-fixing symbiotic bacterium Bradyrhizobium japonicum USDA110.</title>
        <authorList>
            <person name="Kaneko T."/>
            <person name="Nakamura Y."/>
            <person name="Sato S."/>
            <person name="Minamisawa K."/>
            <person name="Uchiumi T."/>
            <person name="Sasamoto S."/>
            <person name="Watanabe A."/>
            <person name="Idesawa K."/>
            <person name="Iriguchi M."/>
            <person name="Kawashima K."/>
            <person name="Kohara M."/>
            <person name="Matsumoto M."/>
            <person name="Shimpo S."/>
            <person name="Tsuruoka H."/>
            <person name="Wada T."/>
            <person name="Yamada M."/>
            <person name="Tabata S."/>
        </authorList>
    </citation>
    <scope>NUCLEOTIDE SEQUENCE [LARGE SCALE GENOMIC DNA]</scope>
    <source>
        <strain>JCM 10833 / BCRC 13528 / IAM 13628 / NBRC 14792 / USDA 110</strain>
    </source>
</reference>
<accession>Q89MI0</accession>